<sequence>MNAGIIGLGRYIPEKVLTNLDLEKMVETSDEWIRTRTGIEERRIASDDVNTSHMALAAAKKALADADVAAEDIDMILVATVTPDQAFPTVACMIQEQLGAHKACAMDISAACAGFMYGLVTGKQFIESGTFKHVLVVGVEKLSRITDWDDRNTAVLFGDGAGAAVLGEVSEGKGILSFELGADGRGGKHLYLDEKDHTIMNGREVFKFAVRQMGESSVNVIEKAGLSKEDVDFLIPHQANIRIMEAARERLELPVEKMSKTVHKYGNTSAASIPISLCEEIEAGKIHDGDVIVMVGFGGGLTWGAIAMRWGR</sequence>
<evidence type="ECO:0000255" key="1">
    <source>
        <dbReference type="HAMAP-Rule" id="MF_01815"/>
    </source>
</evidence>
<reference key="1">
    <citation type="journal article" date="2007" name="PLoS ONE">
        <title>Paradoxical DNA repair and peroxide resistance gene conservation in Bacillus pumilus SAFR-032.</title>
        <authorList>
            <person name="Gioia J."/>
            <person name="Yerrapragada S."/>
            <person name="Qin X."/>
            <person name="Jiang H."/>
            <person name="Igboeli O.C."/>
            <person name="Muzny D."/>
            <person name="Dugan-Rocha S."/>
            <person name="Ding Y."/>
            <person name="Hawes A."/>
            <person name="Liu W."/>
            <person name="Perez L."/>
            <person name="Kovar C."/>
            <person name="Dinh H."/>
            <person name="Lee S."/>
            <person name="Nazareth L."/>
            <person name="Blyth P."/>
            <person name="Holder M."/>
            <person name="Buhay C."/>
            <person name="Tirumalai M.R."/>
            <person name="Liu Y."/>
            <person name="Dasgupta I."/>
            <person name="Bokhetache L."/>
            <person name="Fujita M."/>
            <person name="Karouia F."/>
            <person name="Eswara Moorthy P."/>
            <person name="Siefert J."/>
            <person name="Uzman A."/>
            <person name="Buzumbo P."/>
            <person name="Verma A."/>
            <person name="Zwiya H."/>
            <person name="McWilliams B.D."/>
            <person name="Olowu A."/>
            <person name="Clinkenbeard K.D."/>
            <person name="Newcombe D."/>
            <person name="Golebiewski L."/>
            <person name="Petrosino J.F."/>
            <person name="Nicholson W.L."/>
            <person name="Fox G.E."/>
            <person name="Venkateswaran K."/>
            <person name="Highlander S.K."/>
            <person name="Weinstock G.M."/>
        </authorList>
    </citation>
    <scope>NUCLEOTIDE SEQUENCE [LARGE SCALE GENOMIC DNA]</scope>
    <source>
        <strain>SAFR-032</strain>
    </source>
</reference>
<organism>
    <name type="scientific">Bacillus pumilus (strain SAFR-032)</name>
    <dbReference type="NCBI Taxonomy" id="315750"/>
    <lineage>
        <taxon>Bacteria</taxon>
        <taxon>Bacillati</taxon>
        <taxon>Bacillota</taxon>
        <taxon>Bacilli</taxon>
        <taxon>Bacillales</taxon>
        <taxon>Bacillaceae</taxon>
        <taxon>Bacillus</taxon>
    </lineage>
</organism>
<gene>
    <name evidence="1" type="primary">fabH</name>
    <name type="ordered locus">BPUM_1057</name>
</gene>
<accession>A8FBX4</accession>
<protein>
    <recommendedName>
        <fullName evidence="1">Beta-ketoacyl-[acyl-carrier-protein] synthase III</fullName>
        <shortName evidence="1">Beta-ketoacyl-ACP synthase III</shortName>
        <shortName evidence="1">KAS III</shortName>
        <ecNumber evidence="1">2.3.1.180</ecNumber>
    </recommendedName>
    <alternativeName>
        <fullName evidence="1">3-oxoacyl-[acyl-carrier-protein] synthase 3</fullName>
    </alternativeName>
    <alternativeName>
        <fullName evidence="1">3-oxoacyl-[acyl-carrier-protein] synthase III</fullName>
    </alternativeName>
</protein>
<feature type="chain" id="PRO_1000070214" description="Beta-ketoacyl-[acyl-carrier-protein] synthase III">
    <location>
        <begin position="1"/>
        <end position="312"/>
    </location>
</feature>
<feature type="region of interest" description="ACP-binding" evidence="1">
    <location>
        <begin position="238"/>
        <end position="242"/>
    </location>
</feature>
<feature type="active site" evidence="1">
    <location>
        <position position="112"/>
    </location>
</feature>
<feature type="active site" evidence="1">
    <location>
        <position position="237"/>
    </location>
</feature>
<feature type="active site" evidence="1">
    <location>
        <position position="267"/>
    </location>
</feature>
<proteinExistence type="inferred from homology"/>
<keyword id="KW-0012">Acyltransferase</keyword>
<keyword id="KW-0963">Cytoplasm</keyword>
<keyword id="KW-0275">Fatty acid biosynthesis</keyword>
<keyword id="KW-0276">Fatty acid metabolism</keyword>
<keyword id="KW-0444">Lipid biosynthesis</keyword>
<keyword id="KW-0443">Lipid metabolism</keyword>
<keyword id="KW-0511">Multifunctional enzyme</keyword>
<keyword id="KW-0808">Transferase</keyword>
<dbReference type="EC" id="2.3.1.180" evidence="1"/>
<dbReference type="EMBL" id="CP000813">
    <property type="protein sequence ID" value="ABV61741.1"/>
    <property type="molecule type" value="Genomic_DNA"/>
</dbReference>
<dbReference type="RefSeq" id="WP_012009552.1">
    <property type="nucleotide sequence ID" value="NZ_VEIS01000013.1"/>
</dbReference>
<dbReference type="SMR" id="A8FBX4"/>
<dbReference type="STRING" id="315750.BPUM_1057"/>
<dbReference type="GeneID" id="5620321"/>
<dbReference type="KEGG" id="bpu:BPUM_1057"/>
<dbReference type="eggNOG" id="COG0332">
    <property type="taxonomic scope" value="Bacteria"/>
</dbReference>
<dbReference type="HOGENOM" id="CLU_039592_3_1_9"/>
<dbReference type="OrthoDB" id="9815506at2"/>
<dbReference type="UniPathway" id="UPA00094"/>
<dbReference type="Proteomes" id="UP000001355">
    <property type="component" value="Chromosome"/>
</dbReference>
<dbReference type="GO" id="GO:0005737">
    <property type="term" value="C:cytoplasm"/>
    <property type="evidence" value="ECO:0007669"/>
    <property type="project" value="UniProtKB-SubCell"/>
</dbReference>
<dbReference type="GO" id="GO:0004315">
    <property type="term" value="F:3-oxoacyl-[acyl-carrier-protein] synthase activity"/>
    <property type="evidence" value="ECO:0007669"/>
    <property type="project" value="InterPro"/>
</dbReference>
<dbReference type="GO" id="GO:0033818">
    <property type="term" value="F:beta-ketoacyl-acyl-carrier-protein synthase III activity"/>
    <property type="evidence" value="ECO:0007669"/>
    <property type="project" value="UniProtKB-UniRule"/>
</dbReference>
<dbReference type="GO" id="GO:0006633">
    <property type="term" value="P:fatty acid biosynthetic process"/>
    <property type="evidence" value="ECO:0007669"/>
    <property type="project" value="UniProtKB-UniRule"/>
</dbReference>
<dbReference type="CDD" id="cd00830">
    <property type="entry name" value="KAS_III"/>
    <property type="match status" value="1"/>
</dbReference>
<dbReference type="FunFam" id="3.40.47.10:FF:000004">
    <property type="entry name" value="3-oxoacyl-[acyl-carrier-protein] synthase 3"/>
    <property type="match status" value="1"/>
</dbReference>
<dbReference type="Gene3D" id="3.40.47.10">
    <property type="match status" value="1"/>
</dbReference>
<dbReference type="HAMAP" id="MF_01815">
    <property type="entry name" value="FabH"/>
    <property type="match status" value="1"/>
</dbReference>
<dbReference type="InterPro" id="IPR013747">
    <property type="entry name" value="ACP_syn_III_C"/>
</dbReference>
<dbReference type="InterPro" id="IPR013751">
    <property type="entry name" value="ACP_syn_III_N"/>
</dbReference>
<dbReference type="InterPro" id="IPR004655">
    <property type="entry name" value="FabH"/>
</dbReference>
<dbReference type="InterPro" id="IPR016039">
    <property type="entry name" value="Thiolase-like"/>
</dbReference>
<dbReference type="NCBIfam" id="TIGR00747">
    <property type="entry name" value="fabH"/>
    <property type="match status" value="1"/>
</dbReference>
<dbReference type="NCBIfam" id="NF006829">
    <property type="entry name" value="PRK09352.1"/>
    <property type="match status" value="1"/>
</dbReference>
<dbReference type="PANTHER" id="PTHR43091">
    <property type="entry name" value="3-OXOACYL-[ACYL-CARRIER-PROTEIN] SYNTHASE"/>
    <property type="match status" value="1"/>
</dbReference>
<dbReference type="PANTHER" id="PTHR43091:SF1">
    <property type="entry name" value="BETA-KETOACYL-[ACYL-CARRIER-PROTEIN] SYNTHASE III, CHLOROPLASTIC"/>
    <property type="match status" value="1"/>
</dbReference>
<dbReference type="Pfam" id="PF08545">
    <property type="entry name" value="ACP_syn_III"/>
    <property type="match status" value="1"/>
</dbReference>
<dbReference type="Pfam" id="PF08541">
    <property type="entry name" value="ACP_syn_III_C"/>
    <property type="match status" value="1"/>
</dbReference>
<dbReference type="SUPFAM" id="SSF53901">
    <property type="entry name" value="Thiolase-like"/>
    <property type="match status" value="1"/>
</dbReference>
<name>FABH_BACP2</name>
<comment type="function">
    <text evidence="1">Catalyzes the condensation reaction of fatty acid synthesis by the addition to an acyl acceptor of two carbons from malonyl-ACP. Catalyzes the first condensation reaction which initiates fatty acid synthesis and may therefore play a role in governing the total rate of fatty acid production. Possesses both acetoacetyl-ACP synthase and acetyl transacylase activities. Its substrate specificity determines the biosynthesis of branched-chain and/or straight-chain of fatty acids.</text>
</comment>
<comment type="catalytic activity">
    <reaction evidence="1">
        <text>malonyl-[ACP] + acetyl-CoA + H(+) = 3-oxobutanoyl-[ACP] + CO2 + CoA</text>
        <dbReference type="Rhea" id="RHEA:12080"/>
        <dbReference type="Rhea" id="RHEA-COMP:9623"/>
        <dbReference type="Rhea" id="RHEA-COMP:9625"/>
        <dbReference type="ChEBI" id="CHEBI:15378"/>
        <dbReference type="ChEBI" id="CHEBI:16526"/>
        <dbReference type="ChEBI" id="CHEBI:57287"/>
        <dbReference type="ChEBI" id="CHEBI:57288"/>
        <dbReference type="ChEBI" id="CHEBI:78449"/>
        <dbReference type="ChEBI" id="CHEBI:78450"/>
        <dbReference type="EC" id="2.3.1.180"/>
    </reaction>
</comment>
<comment type="pathway">
    <text evidence="1">Lipid metabolism; fatty acid biosynthesis.</text>
</comment>
<comment type="subunit">
    <text evidence="1">Homodimer.</text>
</comment>
<comment type="subcellular location">
    <subcellularLocation>
        <location evidence="1">Cytoplasm</location>
    </subcellularLocation>
</comment>
<comment type="domain">
    <text evidence="1">The last Arg residue of the ACP-binding site is essential for the weak association between ACP/AcpP and FabH.</text>
</comment>
<comment type="similarity">
    <text evidence="1">Belongs to the thiolase-like superfamily. FabH family.</text>
</comment>